<accession>A7I142</accession>
<organism>
    <name type="scientific">Campylobacter hominis (strain ATCC BAA-381 / DSM 21671 / CCUG 45161 / LMG 19568 / NCTC 13146 / CH001A)</name>
    <dbReference type="NCBI Taxonomy" id="360107"/>
    <lineage>
        <taxon>Bacteria</taxon>
        <taxon>Pseudomonadati</taxon>
        <taxon>Campylobacterota</taxon>
        <taxon>Epsilonproteobacteria</taxon>
        <taxon>Campylobacterales</taxon>
        <taxon>Campylobacteraceae</taxon>
        <taxon>Campylobacter</taxon>
    </lineage>
</organism>
<feature type="chain" id="PRO_1000013078" description="Putative membrane protein insertion efficiency factor">
    <location>
        <begin position="1"/>
        <end position="110"/>
    </location>
</feature>
<protein>
    <recommendedName>
        <fullName evidence="1">Putative membrane protein insertion efficiency factor</fullName>
    </recommendedName>
</protein>
<proteinExistence type="inferred from homology"/>
<reference key="1">
    <citation type="submission" date="2007-07" db="EMBL/GenBank/DDBJ databases">
        <title>Complete genome sequence of Campylobacter hominis ATCC BAA-381, a commensal isolated from the human gastrointestinal tract.</title>
        <authorList>
            <person name="Fouts D.E."/>
            <person name="Mongodin E.F."/>
            <person name="Puiu D."/>
            <person name="Sebastian Y."/>
            <person name="Miller W.G."/>
            <person name="Mandrell R.E."/>
            <person name="Nelson K.E."/>
        </authorList>
    </citation>
    <scope>NUCLEOTIDE SEQUENCE [LARGE SCALE GENOMIC DNA]</scope>
    <source>
        <strain>ATCC BAA-381 / DSM 21671 / CCUG 45161 / LMG 19568 / NCTC 13146 / CH001A</strain>
    </source>
</reference>
<evidence type="ECO:0000255" key="1">
    <source>
        <dbReference type="HAMAP-Rule" id="MF_00386"/>
    </source>
</evidence>
<gene>
    <name type="ordered locus">CHAB381_0651</name>
</gene>
<comment type="function">
    <text evidence="1">Could be involved in insertion of integral membrane proteins into the membrane.</text>
</comment>
<comment type="subcellular location">
    <subcellularLocation>
        <location evidence="1">Cell inner membrane</location>
        <topology evidence="1">Peripheral membrane protein</topology>
        <orientation evidence="1">Cytoplasmic side</orientation>
    </subcellularLocation>
</comment>
<comment type="similarity">
    <text evidence="1">Belongs to the UPF0161 family.</text>
</comment>
<name>YIDD_CAMHC</name>
<dbReference type="EMBL" id="CP000776">
    <property type="protein sequence ID" value="ABS51191.1"/>
    <property type="molecule type" value="Genomic_DNA"/>
</dbReference>
<dbReference type="STRING" id="360107.CHAB381_0651"/>
<dbReference type="KEGG" id="cha:CHAB381_0651"/>
<dbReference type="eggNOG" id="COG0759">
    <property type="taxonomic scope" value="Bacteria"/>
</dbReference>
<dbReference type="HOGENOM" id="CLU_144811_4_0_7"/>
<dbReference type="OrthoDB" id="9801753at2"/>
<dbReference type="Proteomes" id="UP000002407">
    <property type="component" value="Chromosome"/>
</dbReference>
<dbReference type="GO" id="GO:0005886">
    <property type="term" value="C:plasma membrane"/>
    <property type="evidence" value="ECO:0007669"/>
    <property type="project" value="UniProtKB-SubCell"/>
</dbReference>
<dbReference type="HAMAP" id="MF_00386">
    <property type="entry name" value="UPF0161_YidD"/>
    <property type="match status" value="1"/>
</dbReference>
<dbReference type="InterPro" id="IPR002696">
    <property type="entry name" value="Membr_insert_effic_factor_YidD"/>
</dbReference>
<dbReference type="NCBIfam" id="TIGR00278">
    <property type="entry name" value="membrane protein insertion efficiency factor YidD"/>
    <property type="match status" value="1"/>
</dbReference>
<dbReference type="PANTHER" id="PTHR33383">
    <property type="entry name" value="MEMBRANE PROTEIN INSERTION EFFICIENCY FACTOR-RELATED"/>
    <property type="match status" value="1"/>
</dbReference>
<dbReference type="PANTHER" id="PTHR33383:SF1">
    <property type="entry name" value="MEMBRANE PROTEIN INSERTION EFFICIENCY FACTOR-RELATED"/>
    <property type="match status" value="1"/>
</dbReference>
<dbReference type="Pfam" id="PF01809">
    <property type="entry name" value="YidD"/>
    <property type="match status" value="1"/>
</dbReference>
<dbReference type="SMART" id="SM01234">
    <property type="entry name" value="Haemolytic"/>
    <property type="match status" value="1"/>
</dbReference>
<keyword id="KW-0997">Cell inner membrane</keyword>
<keyword id="KW-1003">Cell membrane</keyword>
<keyword id="KW-0472">Membrane</keyword>
<keyword id="KW-1185">Reference proteome</keyword>
<sequence length="110" mass="13161">MKNIFMAVIEFYQRFISPVLPNSCRYYPSCSEYSLHEFKFNSFFGAFFATVLRILRCNPLFRGGIDYPLVRLKIQHQKAIFKICRSEVKFWFVPCKSGKFYVIKSFKKEK</sequence>